<reference key="1">
    <citation type="journal article" date="2007" name="J. Bacteriol.">
        <title>The complete genome sequence of Roseobacter denitrificans reveals a mixotrophic rather than photosynthetic metabolism.</title>
        <authorList>
            <person name="Swingley W.D."/>
            <person name="Sadekar S."/>
            <person name="Mastrian S.D."/>
            <person name="Matthies H.J."/>
            <person name="Hao J."/>
            <person name="Ramos H."/>
            <person name="Acharya C.R."/>
            <person name="Conrad A.L."/>
            <person name="Taylor H.L."/>
            <person name="Dejesa L.C."/>
            <person name="Shah M.K."/>
            <person name="O'Huallachain M.E."/>
            <person name="Lince M.T."/>
            <person name="Blankenship R.E."/>
            <person name="Beatty J.T."/>
            <person name="Touchman J.W."/>
        </authorList>
    </citation>
    <scope>NUCLEOTIDE SEQUENCE [LARGE SCALE GENOMIC DNA]</scope>
    <source>
        <strain>ATCC 33942 / OCh 114</strain>
    </source>
</reference>
<accession>Q16AR8</accession>
<protein>
    <recommendedName>
        <fullName evidence="1">ATP-dependent Clp protease adapter protein ClpS</fullName>
    </recommendedName>
</protein>
<organism>
    <name type="scientific">Roseobacter denitrificans (strain ATCC 33942 / OCh 114)</name>
    <name type="common">Erythrobacter sp. (strain OCh 114)</name>
    <name type="synonym">Roseobacter denitrificans</name>
    <dbReference type="NCBI Taxonomy" id="375451"/>
    <lineage>
        <taxon>Bacteria</taxon>
        <taxon>Pseudomonadati</taxon>
        <taxon>Pseudomonadota</taxon>
        <taxon>Alphaproteobacteria</taxon>
        <taxon>Rhodobacterales</taxon>
        <taxon>Roseobacteraceae</taxon>
        <taxon>Roseobacter</taxon>
    </lineage>
</organism>
<keyword id="KW-1185">Reference proteome</keyword>
<sequence>MHRDLHMMSDRSEDDGDTSILTATKPKTKRPPLYKVLLLNDDFTPMEFVVHVLERFFGLNHAQAFEIMLTVHKKGVAVVGVFSHEIAETKVAQVMDFARRHQHPLQCTMEKEE</sequence>
<proteinExistence type="inferred from homology"/>
<name>CLPS_ROSDO</name>
<dbReference type="EMBL" id="CP000362">
    <property type="protein sequence ID" value="ABG30925.1"/>
    <property type="molecule type" value="Genomic_DNA"/>
</dbReference>
<dbReference type="RefSeq" id="WP_011567545.1">
    <property type="nucleotide sequence ID" value="NC_008209.1"/>
</dbReference>
<dbReference type="SMR" id="Q16AR8"/>
<dbReference type="STRING" id="375451.RD1_1279"/>
<dbReference type="KEGG" id="rde:RD1_1279"/>
<dbReference type="eggNOG" id="COG2127">
    <property type="taxonomic scope" value="Bacteria"/>
</dbReference>
<dbReference type="HOGENOM" id="CLU_134358_0_0_5"/>
<dbReference type="OrthoDB" id="9796121at2"/>
<dbReference type="Proteomes" id="UP000007029">
    <property type="component" value="Chromosome"/>
</dbReference>
<dbReference type="GO" id="GO:0030163">
    <property type="term" value="P:protein catabolic process"/>
    <property type="evidence" value="ECO:0007669"/>
    <property type="project" value="InterPro"/>
</dbReference>
<dbReference type="GO" id="GO:0006508">
    <property type="term" value="P:proteolysis"/>
    <property type="evidence" value="ECO:0007669"/>
    <property type="project" value="UniProtKB-UniRule"/>
</dbReference>
<dbReference type="FunFam" id="3.30.1390.10:FF:000002">
    <property type="entry name" value="ATP-dependent Clp protease adapter protein ClpS"/>
    <property type="match status" value="1"/>
</dbReference>
<dbReference type="Gene3D" id="3.30.1390.10">
    <property type="match status" value="1"/>
</dbReference>
<dbReference type="HAMAP" id="MF_00302">
    <property type="entry name" value="ClpS"/>
    <property type="match status" value="1"/>
</dbReference>
<dbReference type="InterPro" id="IPR022935">
    <property type="entry name" value="ClpS"/>
</dbReference>
<dbReference type="InterPro" id="IPR003769">
    <property type="entry name" value="ClpS_core"/>
</dbReference>
<dbReference type="InterPro" id="IPR014719">
    <property type="entry name" value="Ribosomal_bL12_C/ClpS-like"/>
</dbReference>
<dbReference type="NCBIfam" id="NF000669">
    <property type="entry name" value="PRK00033.1-2"/>
    <property type="match status" value="1"/>
</dbReference>
<dbReference type="NCBIfam" id="NF000672">
    <property type="entry name" value="PRK00033.1-5"/>
    <property type="match status" value="1"/>
</dbReference>
<dbReference type="PANTHER" id="PTHR33473:SF19">
    <property type="entry name" value="ATP-DEPENDENT CLP PROTEASE ADAPTER PROTEIN CLPS"/>
    <property type="match status" value="1"/>
</dbReference>
<dbReference type="PANTHER" id="PTHR33473">
    <property type="entry name" value="ATP-DEPENDENT CLP PROTEASE ADAPTER PROTEIN CLPS1, CHLOROPLASTIC"/>
    <property type="match status" value="1"/>
</dbReference>
<dbReference type="Pfam" id="PF02617">
    <property type="entry name" value="ClpS"/>
    <property type="match status" value="1"/>
</dbReference>
<dbReference type="SUPFAM" id="SSF54736">
    <property type="entry name" value="ClpS-like"/>
    <property type="match status" value="1"/>
</dbReference>
<feature type="chain" id="PRO_0000300723" description="ATP-dependent Clp protease adapter protein ClpS">
    <location>
        <begin position="1"/>
        <end position="113"/>
    </location>
</feature>
<feature type="region of interest" description="Disordered" evidence="2">
    <location>
        <begin position="1"/>
        <end position="25"/>
    </location>
</feature>
<feature type="compositionally biased region" description="Basic and acidic residues" evidence="2">
    <location>
        <begin position="1"/>
        <end position="11"/>
    </location>
</feature>
<gene>
    <name evidence="1" type="primary">clpS</name>
    <name type="ordered locus">RD1_1279</name>
</gene>
<comment type="function">
    <text evidence="1">Involved in the modulation of the specificity of the ClpAP-mediated ATP-dependent protein degradation.</text>
</comment>
<comment type="subunit">
    <text evidence="1">Binds to the N-terminal domain of the chaperone ClpA.</text>
</comment>
<comment type="similarity">
    <text evidence="1">Belongs to the ClpS family.</text>
</comment>
<evidence type="ECO:0000255" key="1">
    <source>
        <dbReference type="HAMAP-Rule" id="MF_00302"/>
    </source>
</evidence>
<evidence type="ECO:0000256" key="2">
    <source>
        <dbReference type="SAM" id="MobiDB-lite"/>
    </source>
</evidence>